<keyword id="KW-0067">ATP-binding</keyword>
<keyword id="KW-0436">Ligase</keyword>
<keyword id="KW-0547">Nucleotide-binding</keyword>
<keyword id="KW-0648">Protein biosynthesis</keyword>
<keyword id="KW-1185">Reference proteome</keyword>
<name>GATC_BRADU</name>
<reference key="1">
    <citation type="journal article" date="2002" name="DNA Res.">
        <title>Complete genomic sequence of nitrogen-fixing symbiotic bacterium Bradyrhizobium japonicum USDA110.</title>
        <authorList>
            <person name="Kaneko T."/>
            <person name="Nakamura Y."/>
            <person name="Sato S."/>
            <person name="Minamisawa K."/>
            <person name="Uchiumi T."/>
            <person name="Sasamoto S."/>
            <person name="Watanabe A."/>
            <person name="Idesawa K."/>
            <person name="Iriguchi M."/>
            <person name="Kawashima K."/>
            <person name="Kohara M."/>
            <person name="Matsumoto M."/>
            <person name="Shimpo S."/>
            <person name="Tsuruoka H."/>
            <person name="Wada T."/>
            <person name="Yamada M."/>
            <person name="Tabata S."/>
        </authorList>
    </citation>
    <scope>NUCLEOTIDE SEQUENCE [LARGE SCALE GENOMIC DNA]</scope>
    <source>
        <strain>JCM 10833 / BCRC 13528 / IAM 13628 / NBRC 14792 / USDA 110</strain>
    </source>
</reference>
<gene>
    <name evidence="1" type="primary">gatC</name>
    <name type="ordered locus">bsl5090</name>
</gene>
<dbReference type="EC" id="6.3.5.-" evidence="1"/>
<dbReference type="EMBL" id="BA000040">
    <property type="protein sequence ID" value="BAC50355.1"/>
    <property type="molecule type" value="Genomic_DNA"/>
</dbReference>
<dbReference type="RefSeq" id="NP_771730.1">
    <property type="nucleotide sequence ID" value="NC_004463.1"/>
</dbReference>
<dbReference type="RefSeq" id="WP_011087850.1">
    <property type="nucleotide sequence ID" value="NC_004463.1"/>
</dbReference>
<dbReference type="SMR" id="Q89K28"/>
<dbReference type="STRING" id="224911.AAV28_22815"/>
<dbReference type="EnsemblBacteria" id="BAC50355">
    <property type="protein sequence ID" value="BAC50355"/>
    <property type="gene ID" value="BAC50355"/>
</dbReference>
<dbReference type="GeneID" id="46492095"/>
<dbReference type="KEGG" id="bja:bsl5090"/>
<dbReference type="PATRIC" id="fig|224911.44.peg.4958"/>
<dbReference type="eggNOG" id="COG0721">
    <property type="taxonomic scope" value="Bacteria"/>
</dbReference>
<dbReference type="HOGENOM" id="CLU_105899_2_0_5"/>
<dbReference type="InParanoid" id="Q89K28"/>
<dbReference type="OrthoDB" id="9794326at2"/>
<dbReference type="PhylomeDB" id="Q89K28"/>
<dbReference type="Proteomes" id="UP000002526">
    <property type="component" value="Chromosome"/>
</dbReference>
<dbReference type="GO" id="GO:0050566">
    <property type="term" value="F:asparaginyl-tRNA synthase (glutamine-hydrolyzing) activity"/>
    <property type="evidence" value="ECO:0007669"/>
    <property type="project" value="RHEA"/>
</dbReference>
<dbReference type="GO" id="GO:0005524">
    <property type="term" value="F:ATP binding"/>
    <property type="evidence" value="ECO:0007669"/>
    <property type="project" value="UniProtKB-KW"/>
</dbReference>
<dbReference type="GO" id="GO:0050567">
    <property type="term" value="F:glutaminyl-tRNA synthase (glutamine-hydrolyzing) activity"/>
    <property type="evidence" value="ECO:0007669"/>
    <property type="project" value="UniProtKB-UniRule"/>
</dbReference>
<dbReference type="GO" id="GO:0070681">
    <property type="term" value="P:glutaminyl-tRNAGln biosynthesis via transamidation"/>
    <property type="evidence" value="ECO:0000318"/>
    <property type="project" value="GO_Central"/>
</dbReference>
<dbReference type="GO" id="GO:0006450">
    <property type="term" value="P:regulation of translational fidelity"/>
    <property type="evidence" value="ECO:0007669"/>
    <property type="project" value="InterPro"/>
</dbReference>
<dbReference type="GO" id="GO:0006412">
    <property type="term" value="P:translation"/>
    <property type="evidence" value="ECO:0007669"/>
    <property type="project" value="UniProtKB-UniRule"/>
</dbReference>
<dbReference type="Gene3D" id="1.10.20.60">
    <property type="entry name" value="Glu-tRNAGln amidotransferase C subunit, N-terminal domain"/>
    <property type="match status" value="1"/>
</dbReference>
<dbReference type="HAMAP" id="MF_00122">
    <property type="entry name" value="GatC"/>
    <property type="match status" value="1"/>
</dbReference>
<dbReference type="InterPro" id="IPR036113">
    <property type="entry name" value="Asp/Glu-ADT_sf_sub_c"/>
</dbReference>
<dbReference type="InterPro" id="IPR003837">
    <property type="entry name" value="GatC"/>
</dbReference>
<dbReference type="NCBIfam" id="TIGR00135">
    <property type="entry name" value="gatC"/>
    <property type="match status" value="1"/>
</dbReference>
<dbReference type="PANTHER" id="PTHR15004">
    <property type="entry name" value="GLUTAMYL-TRNA(GLN) AMIDOTRANSFERASE SUBUNIT C, MITOCHONDRIAL"/>
    <property type="match status" value="1"/>
</dbReference>
<dbReference type="PANTHER" id="PTHR15004:SF0">
    <property type="entry name" value="GLUTAMYL-TRNA(GLN) AMIDOTRANSFERASE SUBUNIT C, MITOCHONDRIAL"/>
    <property type="match status" value="1"/>
</dbReference>
<dbReference type="Pfam" id="PF02686">
    <property type="entry name" value="GatC"/>
    <property type="match status" value="1"/>
</dbReference>
<dbReference type="SUPFAM" id="SSF141000">
    <property type="entry name" value="Glu-tRNAGln amidotransferase C subunit"/>
    <property type="match status" value="1"/>
</dbReference>
<comment type="function">
    <text evidence="1">Allows the formation of correctly charged Asn-tRNA(Asn) or Gln-tRNA(Gln) through the transamidation of misacylated Asp-tRNA(Asn) or Glu-tRNA(Gln) in organisms which lack either or both of asparaginyl-tRNA or glutaminyl-tRNA synthetases. The reaction takes place in the presence of glutamine and ATP through an activated phospho-Asp-tRNA(Asn) or phospho-Glu-tRNA(Gln).</text>
</comment>
<comment type="catalytic activity">
    <reaction evidence="1">
        <text>L-glutamyl-tRNA(Gln) + L-glutamine + ATP + H2O = L-glutaminyl-tRNA(Gln) + L-glutamate + ADP + phosphate + H(+)</text>
        <dbReference type="Rhea" id="RHEA:17521"/>
        <dbReference type="Rhea" id="RHEA-COMP:9681"/>
        <dbReference type="Rhea" id="RHEA-COMP:9684"/>
        <dbReference type="ChEBI" id="CHEBI:15377"/>
        <dbReference type="ChEBI" id="CHEBI:15378"/>
        <dbReference type="ChEBI" id="CHEBI:29985"/>
        <dbReference type="ChEBI" id="CHEBI:30616"/>
        <dbReference type="ChEBI" id="CHEBI:43474"/>
        <dbReference type="ChEBI" id="CHEBI:58359"/>
        <dbReference type="ChEBI" id="CHEBI:78520"/>
        <dbReference type="ChEBI" id="CHEBI:78521"/>
        <dbReference type="ChEBI" id="CHEBI:456216"/>
    </reaction>
</comment>
<comment type="catalytic activity">
    <reaction evidence="1">
        <text>L-aspartyl-tRNA(Asn) + L-glutamine + ATP + H2O = L-asparaginyl-tRNA(Asn) + L-glutamate + ADP + phosphate + 2 H(+)</text>
        <dbReference type="Rhea" id="RHEA:14513"/>
        <dbReference type="Rhea" id="RHEA-COMP:9674"/>
        <dbReference type="Rhea" id="RHEA-COMP:9677"/>
        <dbReference type="ChEBI" id="CHEBI:15377"/>
        <dbReference type="ChEBI" id="CHEBI:15378"/>
        <dbReference type="ChEBI" id="CHEBI:29985"/>
        <dbReference type="ChEBI" id="CHEBI:30616"/>
        <dbReference type="ChEBI" id="CHEBI:43474"/>
        <dbReference type="ChEBI" id="CHEBI:58359"/>
        <dbReference type="ChEBI" id="CHEBI:78515"/>
        <dbReference type="ChEBI" id="CHEBI:78516"/>
        <dbReference type="ChEBI" id="CHEBI:456216"/>
    </reaction>
</comment>
<comment type="subunit">
    <text evidence="1">Heterotrimer of A, B and C subunits.</text>
</comment>
<comment type="similarity">
    <text evidence="1">Belongs to the GatC family.</text>
</comment>
<sequence>MSVDAATVRRIAHLARIAVSEGEVPHLQGELNAMLAFVEQLSEVNVEGVEAMTSVTPMQMKKRQDVVNDGEIADDIVANAPATEGHFFLVPKVVE</sequence>
<protein>
    <recommendedName>
        <fullName evidence="1">Aspartyl/glutamyl-tRNA(Asn/Gln) amidotransferase subunit C</fullName>
        <shortName evidence="1">Asp/Glu-ADT subunit C</shortName>
        <ecNumber evidence="1">6.3.5.-</ecNumber>
    </recommendedName>
</protein>
<evidence type="ECO:0000255" key="1">
    <source>
        <dbReference type="HAMAP-Rule" id="MF_00122"/>
    </source>
</evidence>
<feature type="chain" id="PRO_0000105282" description="Aspartyl/glutamyl-tRNA(Asn/Gln) amidotransferase subunit C">
    <location>
        <begin position="1"/>
        <end position="95"/>
    </location>
</feature>
<organism>
    <name type="scientific">Bradyrhizobium diazoefficiens (strain JCM 10833 / BCRC 13528 / IAM 13628 / NBRC 14792 / USDA 110)</name>
    <dbReference type="NCBI Taxonomy" id="224911"/>
    <lineage>
        <taxon>Bacteria</taxon>
        <taxon>Pseudomonadati</taxon>
        <taxon>Pseudomonadota</taxon>
        <taxon>Alphaproteobacteria</taxon>
        <taxon>Hyphomicrobiales</taxon>
        <taxon>Nitrobacteraceae</taxon>
        <taxon>Bradyrhizobium</taxon>
    </lineage>
</organism>
<accession>Q89K28</accession>
<proteinExistence type="inferred from homology"/>